<name>MTNA_ROSS1</name>
<protein>
    <recommendedName>
        <fullName evidence="1">Methylthioribose-1-phosphate isomerase</fullName>
        <shortName evidence="1">M1Pi</shortName>
        <shortName evidence="1">MTR-1-P isomerase</shortName>
        <ecNumber evidence="1">5.3.1.23</ecNumber>
    </recommendedName>
    <alternativeName>
        <fullName evidence="1">S-methyl-5-thioribose-1-phosphate isomerase</fullName>
    </alternativeName>
</protein>
<gene>
    <name evidence="1" type="primary">mtnA</name>
    <name type="ordered locus">RoseRS_0485</name>
</gene>
<proteinExistence type="inferred from homology"/>
<evidence type="ECO:0000255" key="1">
    <source>
        <dbReference type="HAMAP-Rule" id="MF_01678"/>
    </source>
</evidence>
<evidence type="ECO:0000305" key="2"/>
<keyword id="KW-0028">Amino-acid biosynthesis</keyword>
<keyword id="KW-0413">Isomerase</keyword>
<keyword id="KW-0486">Methionine biosynthesis</keyword>
<comment type="function">
    <text evidence="1">Catalyzes the interconversion of methylthioribose-1-phosphate (MTR-1-P) into methylthioribulose-1-phosphate (MTRu-1-P).</text>
</comment>
<comment type="catalytic activity">
    <reaction evidence="1">
        <text>5-(methylsulfanyl)-alpha-D-ribose 1-phosphate = 5-(methylsulfanyl)-D-ribulose 1-phosphate</text>
        <dbReference type="Rhea" id="RHEA:19989"/>
        <dbReference type="ChEBI" id="CHEBI:58533"/>
        <dbReference type="ChEBI" id="CHEBI:58548"/>
        <dbReference type="EC" id="5.3.1.23"/>
    </reaction>
</comment>
<comment type="pathway">
    <text evidence="1">Amino-acid biosynthesis; L-methionine biosynthesis via salvage pathway; L-methionine from S-methyl-5-thio-alpha-D-ribose 1-phosphate: step 1/6.</text>
</comment>
<comment type="similarity">
    <text evidence="2">Belongs to the eIF-2B alpha/beta/delta subunits family. MtnA subfamily.</text>
</comment>
<feature type="chain" id="PRO_0000357236" description="Methylthioribose-1-phosphate isomerase">
    <location>
        <begin position="1"/>
        <end position="353"/>
    </location>
</feature>
<feature type="active site" description="Proton donor" evidence="1">
    <location>
        <position position="242"/>
    </location>
</feature>
<feature type="binding site" evidence="1">
    <location>
        <begin position="48"/>
        <end position="50"/>
    </location>
    <ligand>
        <name>substrate</name>
    </ligand>
</feature>
<feature type="binding site" evidence="1">
    <location>
        <position position="94"/>
    </location>
    <ligand>
        <name>substrate</name>
    </ligand>
</feature>
<feature type="binding site" evidence="1">
    <location>
        <position position="201"/>
    </location>
    <ligand>
        <name>substrate</name>
    </ligand>
</feature>
<feature type="binding site" evidence="1">
    <location>
        <begin position="252"/>
        <end position="253"/>
    </location>
    <ligand>
        <name>substrate</name>
    </ligand>
</feature>
<feature type="site" description="Transition state stabilizer" evidence="1">
    <location>
        <position position="162"/>
    </location>
</feature>
<sequence length="353" mass="37871">MSSAFRTVWWEAGQVCLIDQRLLPNETRIVRCAAVEDVAYAIRTMQIRGAPAIGCAAAYGMALAACSAAHDAVGDVARIYARLAEAKALLDAQRPTAVNLSWATRRVLERAQSLNDPSPHDVAQRVLEEAHAILAEDLAMCHAIGRHGVALIPPRGHVLTHCNAGGLATAGYGTALAPVRTAHEQGRPIHVYVDETRPFLQGARLTAWELIQERIPLTLITDNMAGYFMKRGDIDCVIVGADRIVANGDVANKIGTYSLAVLARAHRIPFYVAAPSSTIDCSLPNGDAIPIEERSSDEVTMLFGRRIAPEGVIAAHPAFDVTPADLVTAIITECGVIYPPFAGALQRSGPKRH</sequence>
<dbReference type="EC" id="5.3.1.23" evidence="1"/>
<dbReference type="EMBL" id="CP000686">
    <property type="protein sequence ID" value="ABQ88909.1"/>
    <property type="molecule type" value="Genomic_DNA"/>
</dbReference>
<dbReference type="RefSeq" id="WP_011955266.1">
    <property type="nucleotide sequence ID" value="NC_009523.1"/>
</dbReference>
<dbReference type="SMR" id="A5UQK6"/>
<dbReference type="STRING" id="357808.RoseRS_0485"/>
<dbReference type="KEGG" id="rrs:RoseRS_0485"/>
<dbReference type="eggNOG" id="COG0182">
    <property type="taxonomic scope" value="Bacteria"/>
</dbReference>
<dbReference type="HOGENOM" id="CLU_016218_1_2_0"/>
<dbReference type="OrthoDB" id="9803436at2"/>
<dbReference type="UniPathway" id="UPA00904">
    <property type="reaction ID" value="UER00874"/>
</dbReference>
<dbReference type="Proteomes" id="UP000006554">
    <property type="component" value="Chromosome"/>
</dbReference>
<dbReference type="GO" id="GO:0046523">
    <property type="term" value="F:S-methyl-5-thioribose-1-phosphate isomerase activity"/>
    <property type="evidence" value="ECO:0007669"/>
    <property type="project" value="UniProtKB-UniRule"/>
</dbReference>
<dbReference type="GO" id="GO:0019509">
    <property type="term" value="P:L-methionine salvage from methylthioadenosine"/>
    <property type="evidence" value="ECO:0007669"/>
    <property type="project" value="UniProtKB-UniRule"/>
</dbReference>
<dbReference type="FunFam" id="1.20.120.420:FF:000003">
    <property type="entry name" value="Methylthioribose-1-phosphate isomerase"/>
    <property type="match status" value="1"/>
</dbReference>
<dbReference type="FunFam" id="3.40.50.10470:FF:000006">
    <property type="entry name" value="Methylthioribose-1-phosphate isomerase"/>
    <property type="match status" value="1"/>
</dbReference>
<dbReference type="Gene3D" id="1.20.120.420">
    <property type="entry name" value="translation initiation factor eif-2b, domain 1"/>
    <property type="match status" value="1"/>
</dbReference>
<dbReference type="Gene3D" id="3.40.50.10470">
    <property type="entry name" value="Translation initiation factor eif-2b, domain 2"/>
    <property type="match status" value="1"/>
</dbReference>
<dbReference type="HAMAP" id="MF_01678">
    <property type="entry name" value="Salvage_MtnA"/>
    <property type="match status" value="1"/>
</dbReference>
<dbReference type="InterPro" id="IPR000649">
    <property type="entry name" value="IF-2B-related"/>
</dbReference>
<dbReference type="InterPro" id="IPR005251">
    <property type="entry name" value="IF-M1Pi"/>
</dbReference>
<dbReference type="InterPro" id="IPR042529">
    <property type="entry name" value="IF_2B-like_C"/>
</dbReference>
<dbReference type="InterPro" id="IPR011559">
    <property type="entry name" value="Initiation_fac_2B_a/b/d"/>
</dbReference>
<dbReference type="InterPro" id="IPR027363">
    <property type="entry name" value="M1Pi_N"/>
</dbReference>
<dbReference type="InterPro" id="IPR037171">
    <property type="entry name" value="NagB/RpiA_transferase-like"/>
</dbReference>
<dbReference type="NCBIfam" id="TIGR00524">
    <property type="entry name" value="eIF-2B_rel"/>
    <property type="match status" value="1"/>
</dbReference>
<dbReference type="NCBIfam" id="NF004326">
    <property type="entry name" value="PRK05720.1"/>
    <property type="match status" value="1"/>
</dbReference>
<dbReference type="NCBIfam" id="TIGR00512">
    <property type="entry name" value="salvage_mtnA"/>
    <property type="match status" value="1"/>
</dbReference>
<dbReference type="PANTHER" id="PTHR43475">
    <property type="entry name" value="METHYLTHIORIBOSE-1-PHOSPHATE ISOMERASE"/>
    <property type="match status" value="1"/>
</dbReference>
<dbReference type="PANTHER" id="PTHR43475:SF1">
    <property type="entry name" value="METHYLTHIORIBOSE-1-PHOSPHATE ISOMERASE"/>
    <property type="match status" value="1"/>
</dbReference>
<dbReference type="Pfam" id="PF01008">
    <property type="entry name" value="IF-2B"/>
    <property type="match status" value="1"/>
</dbReference>
<dbReference type="SUPFAM" id="SSF100950">
    <property type="entry name" value="NagB/RpiA/CoA transferase-like"/>
    <property type="match status" value="1"/>
</dbReference>
<accession>A5UQK6</accession>
<reference key="1">
    <citation type="submission" date="2007-04" db="EMBL/GenBank/DDBJ databases">
        <title>Complete sequence of Roseiflexus sp. RS-1.</title>
        <authorList>
            <consortium name="US DOE Joint Genome Institute"/>
            <person name="Copeland A."/>
            <person name="Lucas S."/>
            <person name="Lapidus A."/>
            <person name="Barry K."/>
            <person name="Detter J.C."/>
            <person name="Glavina del Rio T."/>
            <person name="Hammon N."/>
            <person name="Israni S."/>
            <person name="Dalin E."/>
            <person name="Tice H."/>
            <person name="Pitluck S."/>
            <person name="Chertkov O."/>
            <person name="Brettin T."/>
            <person name="Bruce D."/>
            <person name="Han C."/>
            <person name="Schmutz J."/>
            <person name="Larimer F."/>
            <person name="Land M."/>
            <person name="Hauser L."/>
            <person name="Kyrpides N."/>
            <person name="Mikhailova N."/>
            <person name="Bryant D.A."/>
            <person name="Richardson P."/>
        </authorList>
    </citation>
    <scope>NUCLEOTIDE SEQUENCE [LARGE SCALE GENOMIC DNA]</scope>
    <source>
        <strain>RS-1</strain>
    </source>
</reference>
<organism>
    <name type="scientific">Roseiflexus sp. (strain RS-1)</name>
    <dbReference type="NCBI Taxonomy" id="357808"/>
    <lineage>
        <taxon>Bacteria</taxon>
        <taxon>Bacillati</taxon>
        <taxon>Chloroflexota</taxon>
        <taxon>Chloroflexia</taxon>
        <taxon>Chloroflexales</taxon>
        <taxon>Roseiflexineae</taxon>
        <taxon>Roseiflexaceae</taxon>
        <taxon>Roseiflexus</taxon>
    </lineage>
</organism>